<feature type="chain" id="PRO_0000214582" description="UPF0260 protein HI_1355">
    <location>
        <begin position="1"/>
        <end position="154"/>
    </location>
</feature>
<evidence type="ECO:0000305" key="1"/>
<keyword id="KW-1185">Reference proteome</keyword>
<sequence length="154" mass="18163">MQSNMQLEPNFWQTKSLLEMTESEWEALCDGCGKCCYRKYIQGRGKRQKLYYTRIACNLLDLETGKCGNYSERFNIETDCTKLTKKNLPDFHWLPDTCAYRLLYEGKTLPEWHPLISGSPHSVKNADILIKNGIHERDVIDWFEFIIDEDHTFK</sequence>
<comment type="similarity">
    <text evidence="1">Belongs to the UPF0260 family.</text>
</comment>
<gene>
    <name type="ordered locus">HI_1355</name>
</gene>
<proteinExistence type="inferred from homology"/>
<protein>
    <recommendedName>
        <fullName>UPF0260 protein HI_1355</fullName>
    </recommendedName>
</protein>
<dbReference type="EMBL" id="L42023">
    <property type="protein sequence ID" value="AAC23002.1"/>
    <property type="molecule type" value="Genomic_DNA"/>
</dbReference>
<dbReference type="PIR" id="F64026">
    <property type="entry name" value="F64026"/>
</dbReference>
<dbReference type="RefSeq" id="NP_439506.1">
    <property type="nucleotide sequence ID" value="NC_000907.1"/>
</dbReference>
<dbReference type="STRING" id="71421.HI_1355"/>
<dbReference type="DNASU" id="950283"/>
<dbReference type="EnsemblBacteria" id="AAC23002">
    <property type="protein sequence ID" value="AAC23002"/>
    <property type="gene ID" value="HI_1355"/>
</dbReference>
<dbReference type="KEGG" id="hin:HI_1355"/>
<dbReference type="PATRIC" id="fig|71421.8.peg.1408"/>
<dbReference type="eggNOG" id="COG2983">
    <property type="taxonomic scope" value="Bacteria"/>
</dbReference>
<dbReference type="HOGENOM" id="CLU_109769_2_0_6"/>
<dbReference type="OrthoDB" id="9786855at2"/>
<dbReference type="PhylomeDB" id="P44168"/>
<dbReference type="BioCyc" id="HINF71421:G1GJ1-1380-MONOMER"/>
<dbReference type="Proteomes" id="UP000000579">
    <property type="component" value="Chromosome"/>
</dbReference>
<dbReference type="HAMAP" id="MF_00676">
    <property type="entry name" value="UPF0260"/>
    <property type="match status" value="1"/>
</dbReference>
<dbReference type="InterPro" id="IPR005358">
    <property type="entry name" value="Puta_zinc/iron-chelating_dom"/>
</dbReference>
<dbReference type="InterPro" id="IPR008228">
    <property type="entry name" value="UCP006173"/>
</dbReference>
<dbReference type="NCBIfam" id="NF003499">
    <property type="entry name" value="PRK05170.1-2"/>
    <property type="match status" value="1"/>
</dbReference>
<dbReference type="PANTHER" id="PTHR37421">
    <property type="entry name" value="UPF0260 PROTEIN YCGN"/>
    <property type="match status" value="1"/>
</dbReference>
<dbReference type="PANTHER" id="PTHR37421:SF1">
    <property type="entry name" value="UPF0260 PROTEIN YCGN"/>
    <property type="match status" value="1"/>
</dbReference>
<dbReference type="Pfam" id="PF03692">
    <property type="entry name" value="CxxCxxCC"/>
    <property type="match status" value="1"/>
</dbReference>
<dbReference type="PIRSF" id="PIRSF006173">
    <property type="entry name" value="UCP006173"/>
    <property type="match status" value="1"/>
</dbReference>
<reference key="1">
    <citation type="journal article" date="1995" name="Science">
        <title>Whole-genome random sequencing and assembly of Haemophilus influenzae Rd.</title>
        <authorList>
            <person name="Fleischmann R.D."/>
            <person name="Adams M.D."/>
            <person name="White O."/>
            <person name="Clayton R.A."/>
            <person name="Kirkness E.F."/>
            <person name="Kerlavage A.R."/>
            <person name="Bult C.J."/>
            <person name="Tomb J.-F."/>
            <person name="Dougherty B.A."/>
            <person name="Merrick J.M."/>
            <person name="McKenney K."/>
            <person name="Sutton G.G."/>
            <person name="FitzHugh W."/>
            <person name="Fields C.A."/>
            <person name="Gocayne J.D."/>
            <person name="Scott J.D."/>
            <person name="Shirley R."/>
            <person name="Liu L.-I."/>
            <person name="Glodek A."/>
            <person name="Kelley J.M."/>
            <person name="Weidman J.F."/>
            <person name="Phillips C.A."/>
            <person name="Spriggs T."/>
            <person name="Hedblom E."/>
            <person name="Cotton M.D."/>
            <person name="Utterback T.R."/>
            <person name="Hanna M.C."/>
            <person name="Nguyen D.T."/>
            <person name="Saudek D.M."/>
            <person name="Brandon R.C."/>
            <person name="Fine L.D."/>
            <person name="Fritchman J.L."/>
            <person name="Fuhrmann J.L."/>
            <person name="Geoghagen N.S.M."/>
            <person name="Gnehm C.L."/>
            <person name="McDonald L.A."/>
            <person name="Small K.V."/>
            <person name="Fraser C.M."/>
            <person name="Smith H.O."/>
            <person name="Venter J.C."/>
        </authorList>
    </citation>
    <scope>NUCLEOTIDE SEQUENCE [LARGE SCALE GENOMIC DNA]</scope>
    <source>
        <strain>ATCC 51907 / DSM 11121 / KW20 / Rd</strain>
    </source>
</reference>
<accession>P44168</accession>
<organism>
    <name type="scientific">Haemophilus influenzae (strain ATCC 51907 / DSM 11121 / KW20 / Rd)</name>
    <dbReference type="NCBI Taxonomy" id="71421"/>
    <lineage>
        <taxon>Bacteria</taxon>
        <taxon>Pseudomonadati</taxon>
        <taxon>Pseudomonadota</taxon>
        <taxon>Gammaproteobacteria</taxon>
        <taxon>Pasteurellales</taxon>
        <taxon>Pasteurellaceae</taxon>
        <taxon>Haemophilus</taxon>
    </lineage>
</organism>
<name>Y1355_HAEIN</name>